<evidence type="ECO:0000255" key="1">
    <source>
        <dbReference type="HAMAP-Rule" id="MF_01440"/>
    </source>
</evidence>
<protein>
    <recommendedName>
        <fullName evidence="1">Probable chemoreceptor glutamine deamidase CheD 3</fullName>
        <ecNumber evidence="1">3.5.1.44</ecNumber>
    </recommendedName>
</protein>
<reference key="1">
    <citation type="journal article" date="2003" name="Science">
        <title>Genome of Geobacter sulfurreducens: metal reduction in subsurface environments.</title>
        <authorList>
            <person name="Methe B.A."/>
            <person name="Nelson K.E."/>
            <person name="Eisen J.A."/>
            <person name="Paulsen I.T."/>
            <person name="Nelson W.C."/>
            <person name="Heidelberg J.F."/>
            <person name="Wu D."/>
            <person name="Wu M."/>
            <person name="Ward N.L."/>
            <person name="Beanan M.J."/>
            <person name="Dodson R.J."/>
            <person name="Madupu R."/>
            <person name="Brinkac L.M."/>
            <person name="Daugherty S.C."/>
            <person name="DeBoy R.T."/>
            <person name="Durkin A.S."/>
            <person name="Gwinn M.L."/>
            <person name="Kolonay J.F."/>
            <person name="Sullivan S.A."/>
            <person name="Haft D.H."/>
            <person name="Selengut J."/>
            <person name="Davidsen T.M."/>
            <person name="Zafar N."/>
            <person name="White O."/>
            <person name="Tran B."/>
            <person name="Romero C."/>
            <person name="Forberger H.A."/>
            <person name="Weidman J.F."/>
            <person name="Khouri H.M."/>
            <person name="Feldblyum T.V."/>
            <person name="Utterback T.R."/>
            <person name="Van Aken S.E."/>
            <person name="Lovley D.R."/>
            <person name="Fraser C.M."/>
        </authorList>
    </citation>
    <scope>NUCLEOTIDE SEQUENCE [LARGE SCALE GENOMIC DNA]</scope>
    <source>
        <strain>ATCC 51573 / DSM 12127 / PCA</strain>
    </source>
</reference>
<gene>
    <name evidence="1" type="primary">cheD3</name>
    <name type="ordered locus">GSU3201</name>
</gene>
<comment type="function">
    <text evidence="1">Probably deamidates glutamine residues to glutamate on methyl-accepting chemotaxis receptors (MCPs), playing an important role in chemotaxis.</text>
</comment>
<comment type="catalytic activity">
    <reaction evidence="1">
        <text>L-glutaminyl-[protein] + H2O = L-glutamyl-[protein] + NH4(+)</text>
        <dbReference type="Rhea" id="RHEA:16441"/>
        <dbReference type="Rhea" id="RHEA-COMP:10207"/>
        <dbReference type="Rhea" id="RHEA-COMP:10208"/>
        <dbReference type="ChEBI" id="CHEBI:15377"/>
        <dbReference type="ChEBI" id="CHEBI:28938"/>
        <dbReference type="ChEBI" id="CHEBI:29973"/>
        <dbReference type="ChEBI" id="CHEBI:30011"/>
        <dbReference type="EC" id="3.5.1.44"/>
    </reaction>
</comment>
<comment type="similarity">
    <text evidence="1">Belongs to the CheD family.</text>
</comment>
<keyword id="KW-0145">Chemotaxis</keyword>
<keyword id="KW-0378">Hydrolase</keyword>
<keyword id="KW-1185">Reference proteome</keyword>
<organism>
    <name type="scientific">Geobacter sulfurreducens (strain ATCC 51573 / DSM 12127 / PCA)</name>
    <dbReference type="NCBI Taxonomy" id="243231"/>
    <lineage>
        <taxon>Bacteria</taxon>
        <taxon>Pseudomonadati</taxon>
        <taxon>Thermodesulfobacteriota</taxon>
        <taxon>Desulfuromonadia</taxon>
        <taxon>Geobacterales</taxon>
        <taxon>Geobacteraceae</taxon>
        <taxon>Geobacter</taxon>
    </lineage>
</organism>
<sequence length="162" mass="17253">MSRIVSVGISEFKIASAPTILMTYGLGSCVGIALHDPVALTGGLAHTLLPAPVRGMDSMVKSAKFTCWAVDLMVEELIKCGCVAERLVAKLAGGATMFEPQHRTTHSGIGERNVTAAKEALERRGIPLVASDTGDDYGRSLEFNTVTGVITVRALQRPIKRM</sequence>
<proteinExistence type="inferred from homology"/>
<feature type="chain" id="PRO_0000251037" description="Probable chemoreceptor glutamine deamidase CheD 3">
    <location>
        <begin position="1"/>
        <end position="162"/>
    </location>
</feature>
<dbReference type="EC" id="3.5.1.44" evidence="1"/>
<dbReference type="EMBL" id="AE017180">
    <property type="protein sequence ID" value="AAR36592.1"/>
    <property type="molecule type" value="Genomic_DNA"/>
</dbReference>
<dbReference type="RefSeq" id="NP_954242.1">
    <property type="nucleotide sequence ID" value="NC_002939.5"/>
</dbReference>
<dbReference type="RefSeq" id="WP_010943819.1">
    <property type="nucleotide sequence ID" value="NC_002939.5"/>
</dbReference>
<dbReference type="SMR" id="Q747R4"/>
<dbReference type="STRING" id="243231.GSU3201"/>
<dbReference type="EnsemblBacteria" id="AAR36592">
    <property type="protein sequence ID" value="AAR36592"/>
    <property type="gene ID" value="GSU3201"/>
</dbReference>
<dbReference type="KEGG" id="gsu:GSU3201"/>
<dbReference type="PATRIC" id="fig|243231.5.peg.3225"/>
<dbReference type="eggNOG" id="COG1871">
    <property type="taxonomic scope" value="Bacteria"/>
</dbReference>
<dbReference type="HOGENOM" id="CLU_087854_2_0_7"/>
<dbReference type="InParanoid" id="Q747R4"/>
<dbReference type="OrthoDB" id="9807202at2"/>
<dbReference type="Proteomes" id="UP000000577">
    <property type="component" value="Chromosome"/>
</dbReference>
<dbReference type="GO" id="GO:0050568">
    <property type="term" value="F:protein-glutamine glutaminase activity"/>
    <property type="evidence" value="ECO:0007669"/>
    <property type="project" value="UniProtKB-UniRule"/>
</dbReference>
<dbReference type="GO" id="GO:0006935">
    <property type="term" value="P:chemotaxis"/>
    <property type="evidence" value="ECO:0007669"/>
    <property type="project" value="UniProtKB-UniRule"/>
</dbReference>
<dbReference type="CDD" id="cd16352">
    <property type="entry name" value="CheD"/>
    <property type="match status" value="1"/>
</dbReference>
<dbReference type="Gene3D" id="3.30.1330.200">
    <property type="match status" value="1"/>
</dbReference>
<dbReference type="HAMAP" id="MF_01440">
    <property type="entry name" value="CheD"/>
    <property type="match status" value="1"/>
</dbReference>
<dbReference type="InterPro" id="IPR038592">
    <property type="entry name" value="CheD-like_sf"/>
</dbReference>
<dbReference type="InterPro" id="IPR005659">
    <property type="entry name" value="Chemorcpt_Glu_NH3ase_CheD"/>
</dbReference>
<dbReference type="InterPro" id="IPR011324">
    <property type="entry name" value="Cytotoxic_necrot_fac-like_cat"/>
</dbReference>
<dbReference type="PANTHER" id="PTHR35147">
    <property type="entry name" value="CHEMORECEPTOR GLUTAMINE DEAMIDASE CHED-RELATED"/>
    <property type="match status" value="1"/>
</dbReference>
<dbReference type="PANTHER" id="PTHR35147:SF1">
    <property type="entry name" value="CHEMORECEPTOR GLUTAMINE DEAMIDASE CHED-RELATED"/>
    <property type="match status" value="1"/>
</dbReference>
<dbReference type="Pfam" id="PF03975">
    <property type="entry name" value="CheD"/>
    <property type="match status" value="1"/>
</dbReference>
<dbReference type="SUPFAM" id="SSF64438">
    <property type="entry name" value="CNF1/YfiH-like putative cysteine hydrolases"/>
    <property type="match status" value="1"/>
</dbReference>
<accession>Q747R4</accession>
<name>CHED3_GEOSL</name>